<proteinExistence type="inferred from homology"/>
<sequence>MSADVWSQGCERLATELPEQQFNTWIRPLPAAELVDRGDTAVATLRVPNRFKLDWIRNQYAARIESVLSDLAGKPVRLDLQLAAREAPPRPSSDAPRSNGHPQAAGQWLGAPSSSNAGAYTQASAPTPTHRLNTALTFDTLVPGRANQMARTAALHVAGAPGVMYNPLFIYGGVGLGKTHLIHAVGNALLRDKPDARILYLHAEQFITDVVKNYQRKTFDELKAKYHSLDLLLIDDVQFFAGKERTQEEFFNAFEALLAKRAHIIMTSDTYPKGLADIDERLTSRFDAGLTVAIEPPELEMRVAILMKKSDVEGTPMPEDVAFFVAKNVRANVRELEGALRKVLAYARFSQKDINIALAREALKDLLSIQNRQVGVENIQKTVADFYKIKVADMYSKKRPASIARPRQIAMYLAKELTQKSLPEIGELFGGRDHTTVLHAVRKIGGERGKNTELNQQLHVLEQTLKG</sequence>
<accession>A2SBM4</accession>
<comment type="function">
    <text evidence="1">Plays an essential role in the initiation and regulation of chromosomal replication. ATP-DnaA binds to the origin of replication (oriC) to initiate formation of the DNA replication initiation complex once per cell cycle. Binds the DnaA box (a 9 base pair repeat at the origin) and separates the double-stranded (ds)DNA. Forms a right-handed helical filament on oriC DNA; dsDNA binds to the exterior of the filament while single-stranded (ss)DNA is stabiized in the filament's interior. The ATP-DnaA-oriC complex binds and stabilizes one strand of the AT-rich DNA unwinding element (DUE), permitting loading of DNA polymerase. After initiation quickly degrades to an ADP-DnaA complex that is not apt for DNA replication. Binds acidic phospholipids.</text>
</comment>
<comment type="subunit">
    <text evidence="1">Oligomerizes as a right-handed, spiral filament on DNA at oriC.</text>
</comment>
<comment type="subcellular location">
    <subcellularLocation>
        <location evidence="1">Cytoplasm</location>
    </subcellularLocation>
</comment>
<comment type="domain">
    <text evidence="1">Domain I is involved in oligomerization and binding regulators, domain II is flexibile and of varying length in different bacteria, domain III forms the AAA+ region, while domain IV binds dsDNA.</text>
</comment>
<comment type="similarity">
    <text evidence="1">Belongs to the DnaA family.</text>
</comment>
<evidence type="ECO:0000255" key="1">
    <source>
        <dbReference type="HAMAP-Rule" id="MF_00377"/>
    </source>
</evidence>
<evidence type="ECO:0000256" key="2">
    <source>
        <dbReference type="SAM" id="MobiDB-lite"/>
    </source>
</evidence>
<protein>
    <recommendedName>
        <fullName evidence="1">Chromosomal replication initiator protein DnaA</fullName>
    </recommendedName>
</protein>
<dbReference type="EMBL" id="CP000555">
    <property type="protein sequence ID" value="ABM92963.1"/>
    <property type="molecule type" value="Genomic_DNA"/>
</dbReference>
<dbReference type="RefSeq" id="WP_011827602.1">
    <property type="nucleotide sequence ID" value="NC_008825.1"/>
</dbReference>
<dbReference type="SMR" id="A2SBM4"/>
<dbReference type="STRING" id="420662.Mpe_A0001"/>
<dbReference type="KEGG" id="mpt:Mpe_A0001"/>
<dbReference type="eggNOG" id="COG0593">
    <property type="taxonomic scope" value="Bacteria"/>
</dbReference>
<dbReference type="HOGENOM" id="CLU_026910_0_1_4"/>
<dbReference type="Proteomes" id="UP000000366">
    <property type="component" value="Chromosome"/>
</dbReference>
<dbReference type="GO" id="GO:0005737">
    <property type="term" value="C:cytoplasm"/>
    <property type="evidence" value="ECO:0007669"/>
    <property type="project" value="UniProtKB-SubCell"/>
</dbReference>
<dbReference type="GO" id="GO:0005886">
    <property type="term" value="C:plasma membrane"/>
    <property type="evidence" value="ECO:0007669"/>
    <property type="project" value="TreeGrafter"/>
</dbReference>
<dbReference type="GO" id="GO:0005524">
    <property type="term" value="F:ATP binding"/>
    <property type="evidence" value="ECO:0007669"/>
    <property type="project" value="UniProtKB-UniRule"/>
</dbReference>
<dbReference type="GO" id="GO:0016887">
    <property type="term" value="F:ATP hydrolysis activity"/>
    <property type="evidence" value="ECO:0007669"/>
    <property type="project" value="InterPro"/>
</dbReference>
<dbReference type="GO" id="GO:0003688">
    <property type="term" value="F:DNA replication origin binding"/>
    <property type="evidence" value="ECO:0007669"/>
    <property type="project" value="UniProtKB-UniRule"/>
</dbReference>
<dbReference type="GO" id="GO:0008289">
    <property type="term" value="F:lipid binding"/>
    <property type="evidence" value="ECO:0007669"/>
    <property type="project" value="UniProtKB-KW"/>
</dbReference>
<dbReference type="GO" id="GO:0006270">
    <property type="term" value="P:DNA replication initiation"/>
    <property type="evidence" value="ECO:0007669"/>
    <property type="project" value="UniProtKB-UniRule"/>
</dbReference>
<dbReference type="GO" id="GO:0006275">
    <property type="term" value="P:regulation of DNA replication"/>
    <property type="evidence" value="ECO:0007669"/>
    <property type="project" value="UniProtKB-UniRule"/>
</dbReference>
<dbReference type="CDD" id="cd00009">
    <property type="entry name" value="AAA"/>
    <property type="match status" value="1"/>
</dbReference>
<dbReference type="CDD" id="cd06571">
    <property type="entry name" value="Bac_DnaA_C"/>
    <property type="match status" value="1"/>
</dbReference>
<dbReference type="FunFam" id="1.10.8.60:FF:000003">
    <property type="entry name" value="Chromosomal replication initiator protein DnaA"/>
    <property type="match status" value="1"/>
</dbReference>
<dbReference type="FunFam" id="3.40.50.300:FF:000668">
    <property type="entry name" value="Chromosomal replication initiator protein DnaA"/>
    <property type="match status" value="1"/>
</dbReference>
<dbReference type="Gene3D" id="1.10.1750.10">
    <property type="match status" value="1"/>
</dbReference>
<dbReference type="Gene3D" id="1.10.8.60">
    <property type="match status" value="1"/>
</dbReference>
<dbReference type="Gene3D" id="3.30.300.180">
    <property type="match status" value="1"/>
</dbReference>
<dbReference type="Gene3D" id="3.40.50.300">
    <property type="entry name" value="P-loop containing nucleotide triphosphate hydrolases"/>
    <property type="match status" value="1"/>
</dbReference>
<dbReference type="HAMAP" id="MF_00377">
    <property type="entry name" value="DnaA_bact"/>
    <property type="match status" value="1"/>
</dbReference>
<dbReference type="InterPro" id="IPR003593">
    <property type="entry name" value="AAA+_ATPase"/>
</dbReference>
<dbReference type="InterPro" id="IPR001957">
    <property type="entry name" value="Chromosome_initiator_DnaA"/>
</dbReference>
<dbReference type="InterPro" id="IPR020591">
    <property type="entry name" value="Chromosome_initiator_DnaA-like"/>
</dbReference>
<dbReference type="InterPro" id="IPR018312">
    <property type="entry name" value="Chromosome_initiator_DnaA_CS"/>
</dbReference>
<dbReference type="InterPro" id="IPR013159">
    <property type="entry name" value="DnaA_C"/>
</dbReference>
<dbReference type="InterPro" id="IPR013317">
    <property type="entry name" value="DnaA_dom"/>
</dbReference>
<dbReference type="InterPro" id="IPR024633">
    <property type="entry name" value="DnaA_N_dom"/>
</dbReference>
<dbReference type="InterPro" id="IPR038454">
    <property type="entry name" value="DnaA_N_sf"/>
</dbReference>
<dbReference type="InterPro" id="IPR027417">
    <property type="entry name" value="P-loop_NTPase"/>
</dbReference>
<dbReference type="InterPro" id="IPR010921">
    <property type="entry name" value="Trp_repressor/repl_initiator"/>
</dbReference>
<dbReference type="NCBIfam" id="TIGR00362">
    <property type="entry name" value="DnaA"/>
    <property type="match status" value="1"/>
</dbReference>
<dbReference type="PANTHER" id="PTHR30050">
    <property type="entry name" value="CHROMOSOMAL REPLICATION INITIATOR PROTEIN DNAA"/>
    <property type="match status" value="1"/>
</dbReference>
<dbReference type="PANTHER" id="PTHR30050:SF2">
    <property type="entry name" value="CHROMOSOMAL REPLICATION INITIATOR PROTEIN DNAA"/>
    <property type="match status" value="1"/>
</dbReference>
<dbReference type="Pfam" id="PF00308">
    <property type="entry name" value="Bac_DnaA"/>
    <property type="match status" value="1"/>
</dbReference>
<dbReference type="Pfam" id="PF08299">
    <property type="entry name" value="Bac_DnaA_C"/>
    <property type="match status" value="1"/>
</dbReference>
<dbReference type="Pfam" id="PF11638">
    <property type="entry name" value="DnaA_N"/>
    <property type="match status" value="1"/>
</dbReference>
<dbReference type="PRINTS" id="PR00051">
    <property type="entry name" value="DNAA"/>
</dbReference>
<dbReference type="SMART" id="SM00382">
    <property type="entry name" value="AAA"/>
    <property type="match status" value="1"/>
</dbReference>
<dbReference type="SMART" id="SM00760">
    <property type="entry name" value="Bac_DnaA_C"/>
    <property type="match status" value="1"/>
</dbReference>
<dbReference type="SUPFAM" id="SSF52540">
    <property type="entry name" value="P-loop containing nucleoside triphosphate hydrolases"/>
    <property type="match status" value="1"/>
</dbReference>
<dbReference type="SUPFAM" id="SSF48295">
    <property type="entry name" value="TrpR-like"/>
    <property type="match status" value="1"/>
</dbReference>
<dbReference type="PROSITE" id="PS01008">
    <property type="entry name" value="DNAA"/>
    <property type="match status" value="1"/>
</dbReference>
<name>DNAA_METPP</name>
<feature type="chain" id="PRO_1000060015" description="Chromosomal replication initiator protein DnaA">
    <location>
        <begin position="1"/>
        <end position="467"/>
    </location>
</feature>
<feature type="region of interest" description="Domain I, interacts with DnaA modulators" evidence="1">
    <location>
        <begin position="1"/>
        <end position="74"/>
    </location>
</feature>
<feature type="region of interest" description="Domain II" evidence="1">
    <location>
        <begin position="74"/>
        <end position="130"/>
    </location>
</feature>
<feature type="region of interest" description="Disordered" evidence="2">
    <location>
        <begin position="85"/>
        <end position="127"/>
    </location>
</feature>
<feature type="region of interest" description="Domain III, AAA+ region" evidence="1">
    <location>
        <begin position="131"/>
        <end position="347"/>
    </location>
</feature>
<feature type="region of interest" description="Domain IV, binds dsDNA" evidence="1">
    <location>
        <begin position="348"/>
        <end position="467"/>
    </location>
</feature>
<feature type="compositionally biased region" description="Polar residues" evidence="2">
    <location>
        <begin position="112"/>
        <end position="127"/>
    </location>
</feature>
<feature type="binding site" evidence="1">
    <location>
        <position position="175"/>
    </location>
    <ligand>
        <name>ATP</name>
        <dbReference type="ChEBI" id="CHEBI:30616"/>
    </ligand>
</feature>
<feature type="binding site" evidence="1">
    <location>
        <position position="177"/>
    </location>
    <ligand>
        <name>ATP</name>
        <dbReference type="ChEBI" id="CHEBI:30616"/>
    </ligand>
</feature>
<feature type="binding site" evidence="1">
    <location>
        <position position="178"/>
    </location>
    <ligand>
        <name>ATP</name>
        <dbReference type="ChEBI" id="CHEBI:30616"/>
    </ligand>
</feature>
<feature type="binding site" evidence="1">
    <location>
        <position position="179"/>
    </location>
    <ligand>
        <name>ATP</name>
        <dbReference type="ChEBI" id="CHEBI:30616"/>
    </ligand>
</feature>
<gene>
    <name evidence="1" type="primary">dnaA</name>
    <name type="ordered locus">Mpe_A0001</name>
</gene>
<keyword id="KW-0067">ATP-binding</keyword>
<keyword id="KW-0963">Cytoplasm</keyword>
<keyword id="KW-0235">DNA replication</keyword>
<keyword id="KW-0238">DNA-binding</keyword>
<keyword id="KW-0446">Lipid-binding</keyword>
<keyword id="KW-0547">Nucleotide-binding</keyword>
<keyword id="KW-1185">Reference proteome</keyword>
<reference key="1">
    <citation type="journal article" date="2007" name="J. Bacteriol.">
        <title>Whole-genome analysis of the methyl tert-butyl ether-degrading beta-proteobacterium Methylibium petroleiphilum PM1.</title>
        <authorList>
            <person name="Kane S.R."/>
            <person name="Chakicherla A.Y."/>
            <person name="Chain P.S.G."/>
            <person name="Schmidt R."/>
            <person name="Shin M.W."/>
            <person name="Legler T.C."/>
            <person name="Scow K.M."/>
            <person name="Larimer F.W."/>
            <person name="Lucas S.M."/>
            <person name="Richardson P.M."/>
            <person name="Hristova K.R."/>
        </authorList>
    </citation>
    <scope>NUCLEOTIDE SEQUENCE [LARGE SCALE GENOMIC DNA]</scope>
    <source>
        <strain>ATCC BAA-1232 / LMG 22953 / PM1</strain>
    </source>
</reference>
<organism>
    <name type="scientific">Methylibium petroleiphilum (strain ATCC BAA-1232 / LMG 22953 / PM1)</name>
    <dbReference type="NCBI Taxonomy" id="420662"/>
    <lineage>
        <taxon>Bacteria</taxon>
        <taxon>Pseudomonadati</taxon>
        <taxon>Pseudomonadota</taxon>
        <taxon>Betaproteobacteria</taxon>
        <taxon>Burkholderiales</taxon>
        <taxon>Sphaerotilaceae</taxon>
        <taxon>Methylibium</taxon>
    </lineage>
</organism>